<keyword id="KW-0997">Cell inner membrane</keyword>
<keyword id="KW-1003">Cell membrane</keyword>
<keyword id="KW-0472">Membrane</keyword>
<keyword id="KW-0520">NAD</keyword>
<keyword id="KW-0874">Quinone</keyword>
<keyword id="KW-1278">Translocase</keyword>
<keyword id="KW-0812">Transmembrane</keyword>
<keyword id="KW-1133">Transmembrane helix</keyword>
<keyword id="KW-0813">Transport</keyword>
<keyword id="KW-0830">Ubiquinone</keyword>
<reference key="1">
    <citation type="submission" date="2007-04" db="EMBL/GenBank/DDBJ databases">
        <title>Complete sequence of Pseudomonas mendocina ymp.</title>
        <authorList>
            <consortium name="US DOE Joint Genome Institute"/>
            <person name="Copeland A."/>
            <person name="Lucas S."/>
            <person name="Lapidus A."/>
            <person name="Barry K."/>
            <person name="Glavina del Rio T."/>
            <person name="Dalin E."/>
            <person name="Tice H."/>
            <person name="Pitluck S."/>
            <person name="Kiss H."/>
            <person name="Brettin T."/>
            <person name="Detter J.C."/>
            <person name="Bruce D."/>
            <person name="Han C."/>
            <person name="Schmutz J."/>
            <person name="Larimer F."/>
            <person name="Land M."/>
            <person name="Hauser L."/>
            <person name="Kyrpides N."/>
            <person name="Mikhailova N."/>
            <person name="Hersman L."/>
            <person name="Dubois J."/>
            <person name="Maurice P."/>
            <person name="Richardson P."/>
        </authorList>
    </citation>
    <scope>NUCLEOTIDE SEQUENCE [LARGE SCALE GENOMIC DNA]</scope>
    <source>
        <strain>ymp</strain>
    </source>
</reference>
<protein>
    <recommendedName>
        <fullName evidence="1">NADH-quinone oxidoreductase subunit N</fullName>
        <ecNumber evidence="1">7.1.1.-</ecNumber>
    </recommendedName>
    <alternativeName>
        <fullName evidence="1">NADH dehydrogenase I subunit N</fullName>
    </alternativeName>
    <alternativeName>
        <fullName evidence="1">NDH-1 subunit N</fullName>
    </alternativeName>
</protein>
<dbReference type="EC" id="7.1.1.-" evidence="1"/>
<dbReference type="EMBL" id="CP000680">
    <property type="protein sequence ID" value="ABP85180.1"/>
    <property type="molecule type" value="Genomic_DNA"/>
</dbReference>
<dbReference type="SMR" id="A4XV14"/>
<dbReference type="STRING" id="399739.Pmen_2424"/>
<dbReference type="KEGG" id="pmy:Pmen_2424"/>
<dbReference type="PATRIC" id="fig|399739.8.peg.2446"/>
<dbReference type="eggNOG" id="COG1007">
    <property type="taxonomic scope" value="Bacteria"/>
</dbReference>
<dbReference type="HOGENOM" id="CLU_007100_1_5_6"/>
<dbReference type="OrthoDB" id="9768329at2"/>
<dbReference type="GO" id="GO:0005886">
    <property type="term" value="C:plasma membrane"/>
    <property type="evidence" value="ECO:0007669"/>
    <property type="project" value="UniProtKB-SubCell"/>
</dbReference>
<dbReference type="GO" id="GO:0008137">
    <property type="term" value="F:NADH dehydrogenase (ubiquinone) activity"/>
    <property type="evidence" value="ECO:0007669"/>
    <property type="project" value="InterPro"/>
</dbReference>
<dbReference type="GO" id="GO:0050136">
    <property type="term" value="F:NADH:ubiquinone reductase (non-electrogenic) activity"/>
    <property type="evidence" value="ECO:0007669"/>
    <property type="project" value="UniProtKB-UniRule"/>
</dbReference>
<dbReference type="GO" id="GO:0048038">
    <property type="term" value="F:quinone binding"/>
    <property type="evidence" value="ECO:0007669"/>
    <property type="project" value="UniProtKB-KW"/>
</dbReference>
<dbReference type="GO" id="GO:0042773">
    <property type="term" value="P:ATP synthesis coupled electron transport"/>
    <property type="evidence" value="ECO:0007669"/>
    <property type="project" value="InterPro"/>
</dbReference>
<dbReference type="HAMAP" id="MF_00445">
    <property type="entry name" value="NDH1_NuoN_1"/>
    <property type="match status" value="1"/>
</dbReference>
<dbReference type="InterPro" id="IPR010096">
    <property type="entry name" value="NADH-Q_OxRdtase_suN/2"/>
</dbReference>
<dbReference type="InterPro" id="IPR001750">
    <property type="entry name" value="ND/Mrp_TM"/>
</dbReference>
<dbReference type="NCBIfam" id="TIGR01770">
    <property type="entry name" value="NDH_I_N"/>
    <property type="match status" value="1"/>
</dbReference>
<dbReference type="NCBIfam" id="NF004439">
    <property type="entry name" value="PRK05777.1-1"/>
    <property type="match status" value="1"/>
</dbReference>
<dbReference type="PANTHER" id="PTHR22773">
    <property type="entry name" value="NADH DEHYDROGENASE"/>
    <property type="match status" value="1"/>
</dbReference>
<dbReference type="Pfam" id="PF00361">
    <property type="entry name" value="Proton_antipo_M"/>
    <property type="match status" value="1"/>
</dbReference>
<feature type="chain" id="PRO_0000391208" description="NADH-quinone oxidoreductase subunit N">
    <location>
        <begin position="1"/>
        <end position="494"/>
    </location>
</feature>
<feature type="transmembrane region" description="Helical" evidence="1">
    <location>
        <begin position="13"/>
        <end position="33"/>
    </location>
</feature>
<feature type="transmembrane region" description="Helical" evidence="1">
    <location>
        <begin position="43"/>
        <end position="63"/>
    </location>
</feature>
<feature type="transmembrane region" description="Helical" evidence="1">
    <location>
        <begin position="82"/>
        <end position="102"/>
    </location>
</feature>
<feature type="transmembrane region" description="Helical" evidence="1">
    <location>
        <begin position="117"/>
        <end position="137"/>
    </location>
</feature>
<feature type="transmembrane region" description="Helical" evidence="1">
    <location>
        <begin position="138"/>
        <end position="158"/>
    </location>
</feature>
<feature type="transmembrane region" description="Helical" evidence="1">
    <location>
        <begin position="169"/>
        <end position="189"/>
    </location>
</feature>
<feature type="transmembrane region" description="Helical" evidence="1">
    <location>
        <begin position="209"/>
        <end position="229"/>
    </location>
</feature>
<feature type="transmembrane region" description="Helical" evidence="1">
    <location>
        <begin position="243"/>
        <end position="263"/>
    </location>
</feature>
<feature type="transmembrane region" description="Helical" evidence="1">
    <location>
        <begin position="277"/>
        <end position="297"/>
    </location>
</feature>
<feature type="transmembrane region" description="Helical" evidence="1">
    <location>
        <begin position="311"/>
        <end position="331"/>
    </location>
</feature>
<feature type="transmembrane region" description="Helical" evidence="1">
    <location>
        <begin position="332"/>
        <end position="352"/>
    </location>
</feature>
<feature type="transmembrane region" description="Helical" evidence="1">
    <location>
        <begin position="380"/>
        <end position="400"/>
    </location>
</feature>
<feature type="transmembrane region" description="Helical" evidence="1">
    <location>
        <begin position="412"/>
        <end position="432"/>
    </location>
</feature>
<feature type="transmembrane region" description="Helical" evidence="1">
    <location>
        <begin position="461"/>
        <end position="481"/>
    </location>
</feature>
<comment type="function">
    <text evidence="1">NDH-1 shuttles electrons from NADH, via FMN and iron-sulfur (Fe-S) centers, to quinones in the respiratory chain. The immediate electron acceptor for the enzyme in this species is believed to be ubiquinone. Couples the redox reaction to proton translocation (for every two electrons transferred, four hydrogen ions are translocated across the cytoplasmic membrane), and thus conserves the redox energy in a proton gradient.</text>
</comment>
<comment type="catalytic activity">
    <reaction evidence="1">
        <text>a quinone + NADH + 5 H(+)(in) = a quinol + NAD(+) + 4 H(+)(out)</text>
        <dbReference type="Rhea" id="RHEA:57888"/>
        <dbReference type="ChEBI" id="CHEBI:15378"/>
        <dbReference type="ChEBI" id="CHEBI:24646"/>
        <dbReference type="ChEBI" id="CHEBI:57540"/>
        <dbReference type="ChEBI" id="CHEBI:57945"/>
        <dbReference type="ChEBI" id="CHEBI:132124"/>
    </reaction>
</comment>
<comment type="subunit">
    <text evidence="1">NDH-1 is composed of 13 different subunits. Subunits NuoA, H, J, K, L, M, N constitute the membrane sector of the complex.</text>
</comment>
<comment type="subcellular location">
    <subcellularLocation>
        <location evidence="1">Cell inner membrane</location>
        <topology evidence="1">Multi-pass membrane protein</topology>
    </subcellularLocation>
</comment>
<comment type="similarity">
    <text evidence="1">Belongs to the complex I subunit 2 family.</text>
</comment>
<accession>A4XV14</accession>
<organism>
    <name type="scientific">Ectopseudomonas mendocina (strain ymp)</name>
    <name type="common">Pseudomonas mendocina</name>
    <dbReference type="NCBI Taxonomy" id="399739"/>
    <lineage>
        <taxon>Bacteria</taxon>
        <taxon>Pseudomonadati</taxon>
        <taxon>Pseudomonadota</taxon>
        <taxon>Gammaproteobacteria</taxon>
        <taxon>Pseudomonadales</taxon>
        <taxon>Pseudomonadaceae</taxon>
        <taxon>Ectopseudomonas</taxon>
    </lineage>
</organism>
<proteinExistence type="inferred from homology"/>
<name>NUON_ECTM1</name>
<evidence type="ECO:0000255" key="1">
    <source>
        <dbReference type="HAMAP-Rule" id="MF_00445"/>
    </source>
</evidence>
<sequence>MEHHAVEFTAQHLIALLPLLVTCMSAIVVMLAIAARRNHALTFVLTVLGLNLALLSLLPAMGVAPLEVTALLQIDRFAGYYMALVLAASLACVTLTHAYLGGQSGKGYPGNREELYLLILLSAAGGLVLASAQHLVGLFIGLELLSVPTYGMIAYAFFNKRSLEAGIKYMVLSAAGSAFLLFGMALLYAEAGDMGFRAIGASLAQGSSLLVELGIGMMLIGLAFKLSLVPFHLWTPDVYEGAPAPVAAFLATASKVAVFAVLLRLYQISPATAGGWLNELLTLIAIASILFGNLLALLQNNLKRLLGYSSIAHFGYLLVALIASQGLAVEAIGVYLATYVLTSLGAFGVITLMSTPYSGRDADALYEYRGLFWRRPYLTAVLTVMMLSLAGIPLTAGFIGKFYVIAAGVEAQLWWLLGAMVLGSAIGVFYYLRVMVTLFMREPNLHRHDAPFDWGQRAGGIMLLVVALLAFFLGVYPQPLLELVHNAALVALAQ</sequence>
<gene>
    <name evidence="1" type="primary">nuoN</name>
    <name type="ordered locus">Pmen_2424</name>
</gene>